<sequence length="418" mass="47594">MLDPHILRSRPKDVSDMLQARNVDFDLDALLDADERRRYFMQLADDMRQERNFAGRQVAQFKRDGVDTTAAIKEMKDLSEKLYQAEGEQQSAESEYLELAWTIPNMIDKSVPRGPDETANVVLRKWVGTPTPSVPKGHEELAVGRGLLDMKRAAKVSGARFYYLKGSLVRLNQALISHSLDFLGSRGYTLVQPPYLIRRNAMEGAIIAEDFEDVIYKIEDDDLYLIGTSEHAMAAMHSDEIIEGGLPLRYAGVSPCFRKEAGAHGKDQKGIFRVHQFDKIEQFVFSKPEDSWREHDRMLEITEEFYQGLGIPYRVVLLSSGDMGKVSAKTYDIECWMAAQDAYREVVSCSNCLDFQSRRLKVRFRDRTDEDTQYVHTLNSTLAATSRLLACIIENFQEADGTIRVPQPLQKYVGKEAI</sequence>
<accession>A0RTS8</accession>
<proteinExistence type="inferred from homology"/>
<evidence type="ECO:0000255" key="1">
    <source>
        <dbReference type="HAMAP-Rule" id="MF_00176"/>
    </source>
</evidence>
<keyword id="KW-0030">Aminoacyl-tRNA synthetase</keyword>
<keyword id="KW-0067">ATP-binding</keyword>
<keyword id="KW-0963">Cytoplasm</keyword>
<keyword id="KW-0436">Ligase</keyword>
<keyword id="KW-0547">Nucleotide-binding</keyword>
<keyword id="KW-0648">Protein biosynthesis</keyword>
<keyword id="KW-1185">Reference proteome</keyword>
<dbReference type="EC" id="6.1.1.11" evidence="1"/>
<dbReference type="EMBL" id="DP000238">
    <property type="protein sequence ID" value="ABK76745.1"/>
    <property type="molecule type" value="Genomic_DNA"/>
</dbReference>
<dbReference type="SMR" id="A0RTS8"/>
<dbReference type="STRING" id="414004.CENSYa_0100"/>
<dbReference type="EnsemblBacteria" id="ABK76745">
    <property type="protein sequence ID" value="ABK76745"/>
    <property type="gene ID" value="CENSYa_0100"/>
</dbReference>
<dbReference type="KEGG" id="csy:CENSYa_0100"/>
<dbReference type="PATRIC" id="fig|414004.10.peg.89"/>
<dbReference type="HOGENOM" id="CLU_023797_0_1_2"/>
<dbReference type="UniPathway" id="UPA00906">
    <property type="reaction ID" value="UER00895"/>
</dbReference>
<dbReference type="Proteomes" id="UP000000758">
    <property type="component" value="Chromosome"/>
</dbReference>
<dbReference type="GO" id="GO:0005737">
    <property type="term" value="C:cytoplasm"/>
    <property type="evidence" value="ECO:0007669"/>
    <property type="project" value="UniProtKB-SubCell"/>
</dbReference>
<dbReference type="GO" id="GO:0005524">
    <property type="term" value="F:ATP binding"/>
    <property type="evidence" value="ECO:0007669"/>
    <property type="project" value="UniProtKB-UniRule"/>
</dbReference>
<dbReference type="GO" id="GO:0004828">
    <property type="term" value="F:serine-tRNA ligase activity"/>
    <property type="evidence" value="ECO:0007669"/>
    <property type="project" value="UniProtKB-UniRule"/>
</dbReference>
<dbReference type="GO" id="GO:0016260">
    <property type="term" value="P:selenocysteine biosynthetic process"/>
    <property type="evidence" value="ECO:0007669"/>
    <property type="project" value="UniProtKB-UniRule"/>
</dbReference>
<dbReference type="GO" id="GO:0006434">
    <property type="term" value="P:seryl-tRNA aminoacylation"/>
    <property type="evidence" value="ECO:0007669"/>
    <property type="project" value="UniProtKB-UniRule"/>
</dbReference>
<dbReference type="CDD" id="cd00770">
    <property type="entry name" value="SerRS_core"/>
    <property type="match status" value="1"/>
</dbReference>
<dbReference type="Gene3D" id="3.30.930.10">
    <property type="entry name" value="Bira Bifunctional Protein, Domain 2"/>
    <property type="match status" value="1"/>
</dbReference>
<dbReference type="Gene3D" id="1.10.287.40">
    <property type="entry name" value="Serine-tRNA synthetase, tRNA binding domain"/>
    <property type="match status" value="1"/>
</dbReference>
<dbReference type="HAMAP" id="MF_00176">
    <property type="entry name" value="Ser_tRNA_synth_type1"/>
    <property type="match status" value="1"/>
</dbReference>
<dbReference type="InterPro" id="IPR002314">
    <property type="entry name" value="aa-tRNA-synt_IIb"/>
</dbReference>
<dbReference type="InterPro" id="IPR006195">
    <property type="entry name" value="aa-tRNA-synth_II"/>
</dbReference>
<dbReference type="InterPro" id="IPR045864">
    <property type="entry name" value="aa-tRNA-synth_II/BPL/LPL"/>
</dbReference>
<dbReference type="InterPro" id="IPR002317">
    <property type="entry name" value="Ser-tRNA-ligase_type_1"/>
</dbReference>
<dbReference type="InterPro" id="IPR015866">
    <property type="entry name" value="Ser-tRNA-synth_1_N"/>
</dbReference>
<dbReference type="InterPro" id="IPR042103">
    <property type="entry name" value="SerRS_1_N_sf"/>
</dbReference>
<dbReference type="InterPro" id="IPR033729">
    <property type="entry name" value="SerRS_core"/>
</dbReference>
<dbReference type="InterPro" id="IPR010978">
    <property type="entry name" value="tRNA-bd_arm"/>
</dbReference>
<dbReference type="NCBIfam" id="TIGR00414">
    <property type="entry name" value="serS"/>
    <property type="match status" value="1"/>
</dbReference>
<dbReference type="PANTHER" id="PTHR11778">
    <property type="entry name" value="SERYL-TRNA SYNTHETASE"/>
    <property type="match status" value="1"/>
</dbReference>
<dbReference type="Pfam" id="PF02403">
    <property type="entry name" value="Seryl_tRNA_N"/>
    <property type="match status" value="1"/>
</dbReference>
<dbReference type="Pfam" id="PF00587">
    <property type="entry name" value="tRNA-synt_2b"/>
    <property type="match status" value="1"/>
</dbReference>
<dbReference type="PIRSF" id="PIRSF001529">
    <property type="entry name" value="Ser-tRNA-synth_IIa"/>
    <property type="match status" value="1"/>
</dbReference>
<dbReference type="PRINTS" id="PR00981">
    <property type="entry name" value="TRNASYNTHSER"/>
</dbReference>
<dbReference type="SUPFAM" id="SSF55681">
    <property type="entry name" value="Class II aaRS and biotin synthetases"/>
    <property type="match status" value="1"/>
</dbReference>
<dbReference type="SUPFAM" id="SSF46589">
    <property type="entry name" value="tRNA-binding arm"/>
    <property type="match status" value="1"/>
</dbReference>
<dbReference type="PROSITE" id="PS50862">
    <property type="entry name" value="AA_TRNA_LIGASE_II"/>
    <property type="match status" value="1"/>
</dbReference>
<feature type="chain" id="PRO_1000019647" description="Serine--tRNA ligase">
    <location>
        <begin position="1"/>
        <end position="418"/>
    </location>
</feature>
<feature type="binding site" evidence="1">
    <location>
        <begin position="228"/>
        <end position="230"/>
    </location>
    <ligand>
        <name>L-serine</name>
        <dbReference type="ChEBI" id="CHEBI:33384"/>
    </ligand>
</feature>
<feature type="binding site" evidence="1">
    <location>
        <begin position="258"/>
        <end position="260"/>
    </location>
    <ligand>
        <name>ATP</name>
        <dbReference type="ChEBI" id="CHEBI:30616"/>
    </ligand>
</feature>
<feature type="binding site" evidence="1">
    <location>
        <position position="274"/>
    </location>
    <ligand>
        <name>ATP</name>
        <dbReference type="ChEBI" id="CHEBI:30616"/>
    </ligand>
</feature>
<feature type="binding site" evidence="1">
    <location>
        <position position="281"/>
    </location>
    <ligand>
        <name>L-serine</name>
        <dbReference type="ChEBI" id="CHEBI:33384"/>
    </ligand>
</feature>
<feature type="binding site" evidence="1">
    <location>
        <begin position="345"/>
        <end position="348"/>
    </location>
    <ligand>
        <name>ATP</name>
        <dbReference type="ChEBI" id="CHEBI:30616"/>
    </ligand>
</feature>
<feature type="binding site" evidence="1">
    <location>
        <position position="381"/>
    </location>
    <ligand>
        <name>L-serine</name>
        <dbReference type="ChEBI" id="CHEBI:33384"/>
    </ligand>
</feature>
<protein>
    <recommendedName>
        <fullName evidence="1">Serine--tRNA ligase</fullName>
        <ecNumber evidence="1">6.1.1.11</ecNumber>
    </recommendedName>
    <alternativeName>
        <fullName evidence="1">Seryl-tRNA synthetase</fullName>
        <shortName evidence="1">SerRS</shortName>
    </alternativeName>
    <alternativeName>
        <fullName evidence="1">Seryl-tRNA(Ser/Sec) synthetase</fullName>
    </alternativeName>
</protein>
<reference key="1">
    <citation type="journal article" date="2006" name="Proc. Natl. Acad. Sci. U.S.A.">
        <title>Genomic analysis of the uncultivated marine crenarchaeote Cenarchaeum symbiosum.</title>
        <authorList>
            <person name="Hallam S.J."/>
            <person name="Konstantinidis K.T."/>
            <person name="Putnam N."/>
            <person name="Schleper C."/>
            <person name="Watanabe Y."/>
            <person name="Sugahara J."/>
            <person name="Preston C."/>
            <person name="de la Torre J."/>
            <person name="Richardson P.M."/>
            <person name="DeLong E.F."/>
        </authorList>
    </citation>
    <scope>NUCLEOTIDE SEQUENCE [LARGE SCALE GENOMIC DNA]</scope>
    <source>
        <strain>A</strain>
    </source>
</reference>
<organism>
    <name type="scientific">Cenarchaeum symbiosum (strain A)</name>
    <dbReference type="NCBI Taxonomy" id="414004"/>
    <lineage>
        <taxon>Archaea</taxon>
        <taxon>Nitrososphaerota</taxon>
        <taxon>Candidatus Cenarchaeales</taxon>
        <taxon>Candidatus Cenarchaeaceae</taxon>
        <taxon>Candidatus Cenarchaeum</taxon>
    </lineage>
</organism>
<comment type="function">
    <text evidence="1">Catalyzes the attachment of serine to tRNA(Ser). Is also able to aminoacylate tRNA(Sec) with serine, to form the misacylated tRNA L-seryl-tRNA(Sec), which will be further converted into selenocysteinyl-tRNA(Sec).</text>
</comment>
<comment type="catalytic activity">
    <reaction evidence="1">
        <text>tRNA(Ser) + L-serine + ATP = L-seryl-tRNA(Ser) + AMP + diphosphate + H(+)</text>
        <dbReference type="Rhea" id="RHEA:12292"/>
        <dbReference type="Rhea" id="RHEA-COMP:9669"/>
        <dbReference type="Rhea" id="RHEA-COMP:9703"/>
        <dbReference type="ChEBI" id="CHEBI:15378"/>
        <dbReference type="ChEBI" id="CHEBI:30616"/>
        <dbReference type="ChEBI" id="CHEBI:33019"/>
        <dbReference type="ChEBI" id="CHEBI:33384"/>
        <dbReference type="ChEBI" id="CHEBI:78442"/>
        <dbReference type="ChEBI" id="CHEBI:78533"/>
        <dbReference type="ChEBI" id="CHEBI:456215"/>
        <dbReference type="EC" id="6.1.1.11"/>
    </reaction>
</comment>
<comment type="catalytic activity">
    <reaction evidence="1">
        <text>tRNA(Sec) + L-serine + ATP = L-seryl-tRNA(Sec) + AMP + diphosphate + H(+)</text>
        <dbReference type="Rhea" id="RHEA:42580"/>
        <dbReference type="Rhea" id="RHEA-COMP:9742"/>
        <dbReference type="Rhea" id="RHEA-COMP:10128"/>
        <dbReference type="ChEBI" id="CHEBI:15378"/>
        <dbReference type="ChEBI" id="CHEBI:30616"/>
        <dbReference type="ChEBI" id="CHEBI:33019"/>
        <dbReference type="ChEBI" id="CHEBI:33384"/>
        <dbReference type="ChEBI" id="CHEBI:78442"/>
        <dbReference type="ChEBI" id="CHEBI:78533"/>
        <dbReference type="ChEBI" id="CHEBI:456215"/>
        <dbReference type="EC" id="6.1.1.11"/>
    </reaction>
</comment>
<comment type="pathway">
    <text evidence="1">Aminoacyl-tRNA biosynthesis; selenocysteinyl-tRNA(Sec) biosynthesis; L-seryl-tRNA(Sec) from L-serine and tRNA(Sec): step 1/1.</text>
</comment>
<comment type="subunit">
    <text evidence="1">Homodimer. The tRNA molecule binds across the dimer.</text>
</comment>
<comment type="subcellular location">
    <subcellularLocation>
        <location evidence="1">Cytoplasm</location>
    </subcellularLocation>
</comment>
<comment type="domain">
    <text evidence="1">Consists of two distinct domains, a catalytic core and a N-terminal extension that is involved in tRNA binding.</text>
</comment>
<comment type="similarity">
    <text evidence="1">Belongs to the class-II aminoacyl-tRNA synthetase family. Type-1 seryl-tRNA synthetase subfamily.</text>
</comment>
<gene>
    <name evidence="1" type="primary">serS</name>
    <name type="ordered locus">CENSYa_0100</name>
</gene>
<name>SYS_CENSY</name>